<accession>Q0II65</accession>
<proteinExistence type="evidence at transcript level"/>
<keyword id="KW-0175">Coiled coil</keyword>
<keyword id="KW-1185">Reference proteome</keyword>
<sequence length="222" mass="27524">MFPFKVRKWMGLACFRSLVVSSSSIRQKKLIHKLQEEKAFREEMRHFREKIEDFREEMWNFRSKMRAFRGEILGFWEEDRLFWEEEKTFWKEEKAFWEMEKSFREEEKAFWKKYRIFWKEDRAFWKEDNALWERDRNLLQEDKALWEEEKALWVEERALLEEEKVLWEDKKTLWEEENALWEEEKAAWVEGVVPVVEQQVLEGGHHHVSGRPRSPASSRGRA</sequence>
<evidence type="ECO:0000255" key="1"/>
<protein>
    <recommendedName>
        <fullName>Coiled-coil domain-containing protein 70</fullName>
    </recommendedName>
</protein>
<gene>
    <name type="primary">CCDC70</name>
</gene>
<dbReference type="EMBL" id="BC122784">
    <property type="protein sequence ID" value="AAI22785.1"/>
    <property type="molecule type" value="mRNA"/>
</dbReference>
<dbReference type="RefSeq" id="NP_001069191.1">
    <property type="nucleotide sequence ID" value="NM_001075723.2"/>
</dbReference>
<dbReference type="SMR" id="Q0II65"/>
<dbReference type="STRING" id="9913.ENSBTAP00000026466"/>
<dbReference type="PaxDb" id="9913-ENSBTAP00000026466"/>
<dbReference type="Ensembl" id="ENSBTAT00000026466.4">
    <property type="protein sequence ID" value="ENSBTAP00000026466.3"/>
    <property type="gene ID" value="ENSBTAG00000019863.5"/>
</dbReference>
<dbReference type="Ensembl" id="ENSBTAT00000098266.1">
    <property type="protein sequence ID" value="ENSBTAP00000096275.1"/>
    <property type="gene ID" value="ENSBTAG00000019863.5"/>
</dbReference>
<dbReference type="GeneID" id="515635"/>
<dbReference type="KEGG" id="bta:515635"/>
<dbReference type="CTD" id="83446"/>
<dbReference type="VEuPathDB" id="HostDB:ENSBTAG00000019863"/>
<dbReference type="VGNC" id="VGNC:26912">
    <property type="gene designation" value="CCDC70"/>
</dbReference>
<dbReference type="eggNOG" id="ENOG502S3RY">
    <property type="taxonomic scope" value="Eukaryota"/>
</dbReference>
<dbReference type="GeneTree" id="ENSGT00940000153137"/>
<dbReference type="HOGENOM" id="CLU_1293990_0_0_1"/>
<dbReference type="InParanoid" id="Q0II65"/>
<dbReference type="OMA" id="FREEMWN"/>
<dbReference type="OrthoDB" id="76453at2759"/>
<dbReference type="TreeFam" id="TF336984"/>
<dbReference type="Proteomes" id="UP000009136">
    <property type="component" value="Chromosome 12"/>
</dbReference>
<dbReference type="Bgee" id="ENSBTAG00000019863">
    <property type="expression patterns" value="Expressed in semen and 20 other cell types or tissues"/>
</dbReference>
<dbReference type="GO" id="GO:0005886">
    <property type="term" value="C:plasma membrane"/>
    <property type="evidence" value="ECO:0007669"/>
    <property type="project" value="Ensembl"/>
</dbReference>
<reference key="1">
    <citation type="submission" date="2006-08" db="EMBL/GenBank/DDBJ databases">
        <authorList>
            <consortium name="NIH - Mammalian Gene Collection (MGC) project"/>
        </authorList>
    </citation>
    <scope>NUCLEOTIDE SEQUENCE [LARGE SCALE MRNA]</scope>
    <source>
        <strain>Crossbred X Angus</strain>
        <tissue>Liver</tissue>
    </source>
</reference>
<name>CCD70_BOVIN</name>
<feature type="chain" id="PRO_0000351225" description="Coiled-coil domain-containing protein 70">
    <location>
        <begin position="1"/>
        <end position="222"/>
    </location>
</feature>
<feature type="coiled-coil region" evidence="1">
    <location>
        <begin position="34"/>
        <end position="62"/>
    </location>
</feature>
<feature type="coiled-coil region" evidence="1">
    <location>
        <begin position="129"/>
        <end position="188"/>
    </location>
</feature>
<organism>
    <name type="scientific">Bos taurus</name>
    <name type="common">Bovine</name>
    <dbReference type="NCBI Taxonomy" id="9913"/>
    <lineage>
        <taxon>Eukaryota</taxon>
        <taxon>Metazoa</taxon>
        <taxon>Chordata</taxon>
        <taxon>Craniata</taxon>
        <taxon>Vertebrata</taxon>
        <taxon>Euteleostomi</taxon>
        <taxon>Mammalia</taxon>
        <taxon>Eutheria</taxon>
        <taxon>Laurasiatheria</taxon>
        <taxon>Artiodactyla</taxon>
        <taxon>Ruminantia</taxon>
        <taxon>Pecora</taxon>
        <taxon>Bovidae</taxon>
        <taxon>Bovinae</taxon>
        <taxon>Bos</taxon>
    </lineage>
</organism>